<protein>
    <recommendedName>
        <fullName evidence="2">2-amino-5-formylamino-6-ribosylaminopyrimidin-4(3H)-one 5'-monophosphate deformylase</fullName>
        <shortName evidence="2">FAPy deformylase</shortName>
        <ecNumber evidence="2">3.5.1.102</ecNumber>
    </recommendedName>
    <alternativeName>
        <fullName evidence="2">Formamide hydrolase</fullName>
    </alternativeName>
</protein>
<sequence length="221" mass="24439">MVDLRYASGNIFDEKVHEMGIIALGSFLENHGSALPIDTDAKIASYIALNVSISTGAKFLGVVIPSTEYSYVKHGIHDSIEDVITYIKYLVENGRKIGINKFLIINCHGGNTIILDELSKLNSKDCFIKMESVCLTHASTEEVSLGYAVGILSEDNMKTHDPKIYEEIGMVGLKEAREKNEAIDLEAKSVEKNGVFLDKTHGKSLLNDLITNYVEIVRNMI</sequence>
<comment type="function">
    <text evidence="2">Catalyzes the hydrolysis of the formamide of 2-amino-5-formylamino-6-ribosylamino-4(3H)-pyrimidinone 5'-monophosphate (FAPy) to form 2,5-diamino-6-ribosylamino-4(3H)-pyrimidinone 5'-phosphate (APy).</text>
</comment>
<comment type="catalytic activity">
    <reaction evidence="2">
        <text>2-amino-5-formylamino-6-(5-phospho-D-ribosylamino)pyrimidin-4(3H)-one + H2O = 2,5-diamino-6-(1-D-ribosylamino)pyrimidin-4(3H)-one 5'-phosphate + formate + H(+)</text>
        <dbReference type="Rhea" id="RHEA:27282"/>
        <dbReference type="ChEBI" id="CHEBI:15377"/>
        <dbReference type="ChEBI" id="CHEBI:15378"/>
        <dbReference type="ChEBI" id="CHEBI:15740"/>
        <dbReference type="ChEBI" id="CHEBI:57258"/>
        <dbReference type="ChEBI" id="CHEBI:59545"/>
        <dbReference type="EC" id="3.5.1.102"/>
    </reaction>
</comment>
<comment type="cofactor">
    <cofactor evidence="1">
        <name>Fe(2+)</name>
        <dbReference type="ChEBI" id="CHEBI:29033"/>
    </cofactor>
    <text evidence="1">Requires one Fe(2+) ion for activity.</text>
</comment>
<comment type="cofactor">
    <cofactor evidence="1">
        <name>Fe(2+)</name>
        <dbReference type="ChEBI" id="CHEBI:29033"/>
    </cofactor>
    <cofactor evidence="1">
        <name>Zn(2+)</name>
        <dbReference type="ChEBI" id="CHEBI:29105"/>
    </cofactor>
    <text evidence="1">Requires an additional second metal ion that could be Fe(2+) or Zn(2+).</text>
</comment>
<comment type="pathway">
    <text evidence="2">Cofactor biosynthesis; coenzyme F420 biosynthesis.</text>
</comment>
<comment type="pathway">
    <text evidence="2">Cofactor biosynthesis; riboflavin biosynthesis.</text>
</comment>
<comment type="subunit">
    <text evidence="2">Homodimer.</text>
</comment>
<comment type="similarity">
    <text evidence="2">Belongs to the creatininase superfamily. FAPy deformylase family.</text>
</comment>
<proteinExistence type="inferred from homology"/>
<evidence type="ECO:0000250" key="1"/>
<evidence type="ECO:0000255" key="2">
    <source>
        <dbReference type="HAMAP-Rule" id="MF_02116"/>
    </source>
</evidence>
<keyword id="KW-0378">Hydrolase</keyword>
<keyword id="KW-0408">Iron</keyword>
<keyword id="KW-0479">Metal-binding</keyword>
<keyword id="KW-0862">Zinc</keyword>
<organism>
    <name type="scientific">Methanococcus maripaludis (strain C5 / ATCC BAA-1333)</name>
    <dbReference type="NCBI Taxonomy" id="402880"/>
    <lineage>
        <taxon>Archaea</taxon>
        <taxon>Methanobacteriati</taxon>
        <taxon>Methanobacteriota</taxon>
        <taxon>Methanomada group</taxon>
        <taxon>Methanococci</taxon>
        <taxon>Methanococcales</taxon>
        <taxon>Methanococcaceae</taxon>
        <taxon>Methanococcus</taxon>
    </lineage>
</organism>
<feature type="chain" id="PRO_0000406926" description="2-amino-5-formylamino-6-ribosylaminopyrimidin-4(3H)-one 5'-monophosphate deformylase">
    <location>
        <begin position="1"/>
        <end position="221"/>
    </location>
</feature>
<feature type="binding site" evidence="2">
    <location>
        <position position="29"/>
    </location>
    <ligand>
        <name>Fe cation</name>
        <dbReference type="ChEBI" id="CHEBI:24875"/>
        <label>1</label>
    </ligand>
</feature>
<feature type="binding site" evidence="2">
    <location>
        <position position="31"/>
    </location>
    <ligand>
        <name>Fe cation</name>
        <dbReference type="ChEBI" id="CHEBI:24875"/>
        <label>2</label>
    </ligand>
</feature>
<feature type="binding site" evidence="2">
    <location>
        <position position="40"/>
    </location>
    <ligand>
        <name>Fe cation</name>
        <dbReference type="ChEBI" id="CHEBI:24875"/>
        <label>1</label>
    </ligand>
</feature>
<feature type="binding site" evidence="2">
    <location>
        <position position="40"/>
    </location>
    <ligand>
        <name>Fe cation</name>
        <dbReference type="ChEBI" id="CHEBI:24875"/>
        <label>2</label>
    </ligand>
</feature>
<feature type="binding site" evidence="2">
    <location>
        <position position="108"/>
    </location>
    <ligand>
        <name>Fe cation</name>
        <dbReference type="ChEBI" id="CHEBI:24875"/>
        <label>1</label>
    </ligand>
</feature>
<dbReference type="EC" id="3.5.1.102" evidence="2"/>
<dbReference type="EMBL" id="CP000609">
    <property type="protein sequence ID" value="ABO35998.1"/>
    <property type="molecule type" value="Genomic_DNA"/>
</dbReference>
<dbReference type="RefSeq" id="WP_011869445.1">
    <property type="nucleotide sequence ID" value="NC_009135.1"/>
</dbReference>
<dbReference type="SMR" id="A4G0L4"/>
<dbReference type="STRING" id="402880.MmarC5_1701"/>
<dbReference type="GeneID" id="4928055"/>
<dbReference type="KEGG" id="mmq:MmarC5_1701"/>
<dbReference type="eggNOG" id="arCOG04536">
    <property type="taxonomic scope" value="Archaea"/>
</dbReference>
<dbReference type="HOGENOM" id="CLU_1192640_0_0_2"/>
<dbReference type="OrthoDB" id="46121at2157"/>
<dbReference type="UniPathway" id="UPA00071"/>
<dbReference type="UniPathway" id="UPA00275"/>
<dbReference type="Proteomes" id="UP000000253">
    <property type="component" value="Chromosome"/>
</dbReference>
<dbReference type="GO" id="GO:0043729">
    <property type="term" value="F:2-amino-5-formylamino-6-(5-phosphoribosylamino)pyrimidin-4(3H)-one formate-lyase activity"/>
    <property type="evidence" value="ECO:0007669"/>
    <property type="project" value="UniProtKB-EC"/>
</dbReference>
<dbReference type="GO" id="GO:0008198">
    <property type="term" value="F:ferrous iron binding"/>
    <property type="evidence" value="ECO:0007669"/>
    <property type="project" value="UniProtKB-UniRule"/>
</dbReference>
<dbReference type="GO" id="GO:0052645">
    <property type="term" value="P:F420-0 metabolic process"/>
    <property type="evidence" value="ECO:0007669"/>
    <property type="project" value="UniProtKB-UniRule"/>
</dbReference>
<dbReference type="GO" id="GO:0009231">
    <property type="term" value="P:riboflavin biosynthetic process"/>
    <property type="evidence" value="ECO:0007669"/>
    <property type="project" value="UniProtKB-UniRule"/>
</dbReference>
<dbReference type="Gene3D" id="3.40.50.10310">
    <property type="entry name" value="Creatininase"/>
    <property type="match status" value="1"/>
</dbReference>
<dbReference type="HAMAP" id="MF_02116">
    <property type="entry name" value="FAPy_deform"/>
    <property type="match status" value="1"/>
</dbReference>
<dbReference type="InterPro" id="IPR024087">
    <property type="entry name" value="Creatininase-like_sf"/>
</dbReference>
<dbReference type="InterPro" id="IPR003785">
    <property type="entry name" value="Creatininase/forma_Hydrolase"/>
</dbReference>
<dbReference type="InterPro" id="IPR024901">
    <property type="entry name" value="FAPy_deformylase"/>
</dbReference>
<dbReference type="NCBIfam" id="NF033501">
    <property type="entry name" value="ArfB_arch_rifla"/>
    <property type="match status" value="1"/>
</dbReference>
<dbReference type="PANTHER" id="PTHR35005:SF1">
    <property type="entry name" value="2-AMINO-5-FORMYLAMINO-6-RIBOSYLAMINOPYRIMIDIN-4(3H)-ONE 5'-MONOPHOSPHATE DEFORMYLASE"/>
    <property type="match status" value="1"/>
</dbReference>
<dbReference type="PANTHER" id="PTHR35005">
    <property type="entry name" value="3-DEHYDRO-SCYLLO-INOSOSE HYDROLASE"/>
    <property type="match status" value="1"/>
</dbReference>
<dbReference type="Pfam" id="PF02633">
    <property type="entry name" value="Creatininase"/>
    <property type="match status" value="1"/>
</dbReference>
<dbReference type="SUPFAM" id="SSF102215">
    <property type="entry name" value="Creatininase"/>
    <property type="match status" value="1"/>
</dbReference>
<name>ARFB_METM5</name>
<reference key="1">
    <citation type="submission" date="2007-03" db="EMBL/GenBank/DDBJ databases">
        <title>Complete sequence of chromosome of Methanococcus maripaludis C5.</title>
        <authorList>
            <consortium name="US DOE Joint Genome Institute"/>
            <person name="Copeland A."/>
            <person name="Lucas S."/>
            <person name="Lapidus A."/>
            <person name="Barry K."/>
            <person name="Glavina del Rio T."/>
            <person name="Dalin E."/>
            <person name="Tice H."/>
            <person name="Pitluck S."/>
            <person name="Chertkov O."/>
            <person name="Brettin T."/>
            <person name="Bruce D."/>
            <person name="Han C."/>
            <person name="Detter J.C."/>
            <person name="Schmutz J."/>
            <person name="Larimer F."/>
            <person name="Land M."/>
            <person name="Hauser L."/>
            <person name="Kyrpides N."/>
            <person name="Mikhailova N."/>
            <person name="Sieprawska-Lupa M."/>
            <person name="Whitman W.B."/>
            <person name="Richardson P."/>
        </authorList>
    </citation>
    <scope>NUCLEOTIDE SEQUENCE [LARGE SCALE GENOMIC DNA]</scope>
    <source>
        <strain>C5 / ATCC BAA-1333</strain>
    </source>
</reference>
<gene>
    <name evidence="2" type="primary">arfB</name>
    <name type="ordered locus">MmarC5_1701</name>
</gene>
<accession>A4G0L4</accession>